<gene>
    <name evidence="1" type="primary">pstB</name>
    <name type="ordered locus">TK1868</name>
</gene>
<accession>Q5JEP9</accession>
<feature type="chain" id="PRO_0000272594" description="Phosphate import ATP-binding protein PstB">
    <location>
        <begin position="1"/>
        <end position="253"/>
    </location>
</feature>
<feature type="domain" description="ABC transporter" evidence="1">
    <location>
        <begin position="5"/>
        <end position="248"/>
    </location>
</feature>
<feature type="binding site" evidence="1">
    <location>
        <begin position="37"/>
        <end position="44"/>
    </location>
    <ligand>
        <name>ATP</name>
        <dbReference type="ChEBI" id="CHEBI:30616"/>
    </ligand>
</feature>
<reference key="1">
    <citation type="journal article" date="2005" name="Genome Res.">
        <title>Complete genome sequence of the hyperthermophilic archaeon Thermococcus kodakaraensis KOD1 and comparison with Pyrococcus genomes.</title>
        <authorList>
            <person name="Fukui T."/>
            <person name="Atomi H."/>
            <person name="Kanai T."/>
            <person name="Matsumi R."/>
            <person name="Fujiwara S."/>
            <person name="Imanaka T."/>
        </authorList>
    </citation>
    <scope>NUCLEOTIDE SEQUENCE [LARGE SCALE GENOMIC DNA]</scope>
    <source>
        <strain>ATCC BAA-918 / JCM 12380 / KOD1</strain>
    </source>
</reference>
<evidence type="ECO:0000255" key="1">
    <source>
        <dbReference type="HAMAP-Rule" id="MF_01702"/>
    </source>
</evidence>
<protein>
    <recommendedName>
        <fullName evidence="1">Phosphate import ATP-binding protein PstB</fullName>
        <ecNumber evidence="1">7.3.2.1</ecNumber>
    </recommendedName>
    <alternativeName>
        <fullName evidence="1">ABC phosphate transporter</fullName>
    </alternativeName>
    <alternativeName>
        <fullName evidence="1">Phosphate-transporting ATPase</fullName>
    </alternativeName>
</protein>
<keyword id="KW-0067">ATP-binding</keyword>
<keyword id="KW-1003">Cell membrane</keyword>
<keyword id="KW-0472">Membrane</keyword>
<keyword id="KW-0547">Nucleotide-binding</keyword>
<keyword id="KW-0592">Phosphate transport</keyword>
<keyword id="KW-1185">Reference proteome</keyword>
<keyword id="KW-1278">Translocase</keyword>
<keyword id="KW-0813">Transport</keyword>
<sequence>MNFAIETVNLNVYYGQNHVIKDVDLKIPNKGVFALMGPSGCGKSTMLRTFNRLIELNEDARVEGEVRLFGENIYSEDVDPIEVRKKVGMVFQYPNPFPHLTIYDNVAIGLKLNGLVKSREELDERVEWALKKAALWDEVKDRLNDYPGNLSGGQRQRLVIARALAMKPEVLLMDEPTANIDPVGTAKIEELLLELKEDYTIVLVTHSPAQAARVADYVAFLYLGELIEVGPARKVFENPEHELTEKYVTGALG</sequence>
<proteinExistence type="inferred from homology"/>
<name>PSTB_THEKO</name>
<organism>
    <name type="scientific">Thermococcus kodakarensis (strain ATCC BAA-918 / JCM 12380 / KOD1)</name>
    <name type="common">Pyrococcus kodakaraensis (strain KOD1)</name>
    <dbReference type="NCBI Taxonomy" id="69014"/>
    <lineage>
        <taxon>Archaea</taxon>
        <taxon>Methanobacteriati</taxon>
        <taxon>Methanobacteriota</taxon>
        <taxon>Thermococci</taxon>
        <taxon>Thermococcales</taxon>
        <taxon>Thermococcaceae</taxon>
        <taxon>Thermococcus</taxon>
    </lineage>
</organism>
<comment type="function">
    <text evidence="1">Part of the ABC transporter complex PstSACB involved in phosphate import. Responsible for energy coupling to the transport system.</text>
</comment>
<comment type="catalytic activity">
    <reaction evidence="1">
        <text>phosphate(out) + ATP + H2O = ADP + 2 phosphate(in) + H(+)</text>
        <dbReference type="Rhea" id="RHEA:24440"/>
        <dbReference type="ChEBI" id="CHEBI:15377"/>
        <dbReference type="ChEBI" id="CHEBI:15378"/>
        <dbReference type="ChEBI" id="CHEBI:30616"/>
        <dbReference type="ChEBI" id="CHEBI:43474"/>
        <dbReference type="ChEBI" id="CHEBI:456216"/>
        <dbReference type="EC" id="7.3.2.1"/>
    </reaction>
</comment>
<comment type="subunit">
    <text evidence="1">The complex is composed of two ATP-binding proteins (PstB), two transmembrane proteins (PstC and PstA) and a solute-binding protein (PstS).</text>
</comment>
<comment type="subcellular location">
    <subcellularLocation>
        <location evidence="1">Cell membrane</location>
        <topology evidence="1">Peripheral membrane protein</topology>
    </subcellularLocation>
</comment>
<comment type="similarity">
    <text evidence="1">Belongs to the ABC transporter superfamily. Phosphate importer (TC 3.A.1.7) family.</text>
</comment>
<dbReference type="EC" id="7.3.2.1" evidence="1"/>
<dbReference type="EMBL" id="AP006878">
    <property type="protein sequence ID" value="BAD86057.1"/>
    <property type="molecule type" value="Genomic_DNA"/>
</dbReference>
<dbReference type="RefSeq" id="WP_011250819.1">
    <property type="nucleotide sequence ID" value="NC_006624.1"/>
</dbReference>
<dbReference type="SMR" id="Q5JEP9"/>
<dbReference type="FunCoup" id="Q5JEP9">
    <property type="interactions" value="46"/>
</dbReference>
<dbReference type="STRING" id="69014.TK1868"/>
<dbReference type="EnsemblBacteria" id="BAD86057">
    <property type="protein sequence ID" value="BAD86057"/>
    <property type="gene ID" value="TK1868"/>
</dbReference>
<dbReference type="GeneID" id="78448399"/>
<dbReference type="KEGG" id="tko:TK1868"/>
<dbReference type="PATRIC" id="fig|69014.16.peg.1826"/>
<dbReference type="eggNOG" id="arCOG00231">
    <property type="taxonomic scope" value="Archaea"/>
</dbReference>
<dbReference type="HOGENOM" id="CLU_000604_1_22_2"/>
<dbReference type="InParanoid" id="Q5JEP9"/>
<dbReference type="OrthoDB" id="31298at2157"/>
<dbReference type="PhylomeDB" id="Q5JEP9"/>
<dbReference type="Proteomes" id="UP000000536">
    <property type="component" value="Chromosome"/>
</dbReference>
<dbReference type="GO" id="GO:0005886">
    <property type="term" value="C:plasma membrane"/>
    <property type="evidence" value="ECO:0007669"/>
    <property type="project" value="UniProtKB-SubCell"/>
</dbReference>
<dbReference type="GO" id="GO:0005524">
    <property type="term" value="F:ATP binding"/>
    <property type="evidence" value="ECO:0007669"/>
    <property type="project" value="UniProtKB-KW"/>
</dbReference>
<dbReference type="GO" id="GO:0016887">
    <property type="term" value="F:ATP hydrolysis activity"/>
    <property type="evidence" value="ECO:0007669"/>
    <property type="project" value="InterPro"/>
</dbReference>
<dbReference type="GO" id="GO:0015415">
    <property type="term" value="F:ATPase-coupled phosphate ion transmembrane transporter activity"/>
    <property type="evidence" value="ECO:0007669"/>
    <property type="project" value="UniProtKB-EC"/>
</dbReference>
<dbReference type="GO" id="GO:0035435">
    <property type="term" value="P:phosphate ion transmembrane transport"/>
    <property type="evidence" value="ECO:0007669"/>
    <property type="project" value="InterPro"/>
</dbReference>
<dbReference type="CDD" id="cd03260">
    <property type="entry name" value="ABC_PstB_phosphate_transporter"/>
    <property type="match status" value="1"/>
</dbReference>
<dbReference type="Gene3D" id="3.40.50.300">
    <property type="entry name" value="P-loop containing nucleotide triphosphate hydrolases"/>
    <property type="match status" value="1"/>
</dbReference>
<dbReference type="InterPro" id="IPR003593">
    <property type="entry name" value="AAA+_ATPase"/>
</dbReference>
<dbReference type="InterPro" id="IPR003439">
    <property type="entry name" value="ABC_transporter-like_ATP-bd"/>
</dbReference>
<dbReference type="InterPro" id="IPR017871">
    <property type="entry name" value="ABC_transporter-like_CS"/>
</dbReference>
<dbReference type="InterPro" id="IPR027417">
    <property type="entry name" value="P-loop_NTPase"/>
</dbReference>
<dbReference type="InterPro" id="IPR005670">
    <property type="entry name" value="PstB-like"/>
</dbReference>
<dbReference type="NCBIfam" id="TIGR00972">
    <property type="entry name" value="3a0107s01c2"/>
    <property type="match status" value="1"/>
</dbReference>
<dbReference type="NCBIfam" id="NF010860">
    <property type="entry name" value="PRK14267.1"/>
    <property type="match status" value="1"/>
</dbReference>
<dbReference type="PANTHER" id="PTHR43423">
    <property type="entry name" value="ABC TRANSPORTER I FAMILY MEMBER 17"/>
    <property type="match status" value="1"/>
</dbReference>
<dbReference type="PANTHER" id="PTHR43423:SF1">
    <property type="entry name" value="ABC TRANSPORTER I FAMILY MEMBER 17"/>
    <property type="match status" value="1"/>
</dbReference>
<dbReference type="Pfam" id="PF00005">
    <property type="entry name" value="ABC_tran"/>
    <property type="match status" value="1"/>
</dbReference>
<dbReference type="SMART" id="SM00382">
    <property type="entry name" value="AAA"/>
    <property type="match status" value="1"/>
</dbReference>
<dbReference type="SUPFAM" id="SSF52540">
    <property type="entry name" value="P-loop containing nucleoside triphosphate hydrolases"/>
    <property type="match status" value="1"/>
</dbReference>
<dbReference type="PROSITE" id="PS00211">
    <property type="entry name" value="ABC_TRANSPORTER_1"/>
    <property type="match status" value="1"/>
</dbReference>
<dbReference type="PROSITE" id="PS50893">
    <property type="entry name" value="ABC_TRANSPORTER_2"/>
    <property type="match status" value="1"/>
</dbReference>
<dbReference type="PROSITE" id="PS51238">
    <property type="entry name" value="PSTB"/>
    <property type="match status" value="1"/>
</dbReference>